<comment type="function">
    <text evidence="3">Acts on ADP-mannose and ADP-glucose as well as ADP-ribose. Prevents glycogen biosynthesis. The reaction catalyzed by this enzyme is a limiting step of the gluconeogenic process.</text>
</comment>
<comment type="catalytic activity">
    <reaction evidence="2">
        <text>ADP-D-ribose + H2O = D-ribose 5-phosphate + AMP + 2 H(+)</text>
        <dbReference type="Rhea" id="RHEA:10412"/>
        <dbReference type="ChEBI" id="CHEBI:15377"/>
        <dbReference type="ChEBI" id="CHEBI:15378"/>
        <dbReference type="ChEBI" id="CHEBI:57967"/>
        <dbReference type="ChEBI" id="CHEBI:78346"/>
        <dbReference type="ChEBI" id="CHEBI:456215"/>
        <dbReference type="EC" id="3.6.1.13"/>
    </reaction>
</comment>
<comment type="cofactor">
    <cofactor evidence="2 4">
        <name>Mg(2+)</name>
        <dbReference type="ChEBI" id="CHEBI:18420"/>
    </cofactor>
    <text evidence="2 4">Binds 3 Mg(2+) ions per subunit.</text>
</comment>
<comment type="activity regulation">
    <text>Inhibited by phosphorylated compounds such as AMP, ADP, ATP, 3-phosphoglyceric acid and PPi. Not inhibited by orthophosphate. Activity is high in cells grown in low glucose concentrations and decreases dramatically as glucose concentration increases.</text>
</comment>
<comment type="subunit">
    <text evidence="2 4">Homodimer.</text>
</comment>
<comment type="interaction">
    <interactant intactId="EBI-562814">
        <id>Q93K97</id>
    </interactant>
    <interactant intactId="EBI-555448">
        <id>P37678</id>
        <label>sgbH</label>
    </interactant>
    <organismsDiffer>false</organismsDiffer>
    <experiments>2</experiments>
</comment>
<comment type="similarity">
    <text evidence="5">Belongs to the Nudix hydrolase family. NudF subfamily.</text>
</comment>
<accession>Q93K97</accession>
<accession>P36651</accession>
<accession>P82969</accession>
<accession>Q2M9G6</accession>
<reference key="1">
    <citation type="journal article" date="2001" name="Proc. Natl. Acad. Sci. U.S.A.">
        <title>Adenosine diphosphate sugar pyrophosphatase prevents glycogen biosynthesis in Escherichia coli.</title>
        <authorList>
            <person name="Moreno-Bruna B."/>
            <person name="Baroja-Fernandez E."/>
            <person name="Munoz F.J."/>
            <person name="Bastarrica-Berasategui A."/>
            <person name="Zandueta-Criado A."/>
            <person name="Rodriguez-Lopez M."/>
            <person name="Lasa I."/>
            <person name="Akazawa T."/>
            <person name="Pozueta-Romero J."/>
        </authorList>
    </citation>
    <scope>NUCLEOTIDE SEQUENCE [GENOMIC DNA]</scope>
    <scope>PROTEIN SEQUENCE OF 1-15</scope>
    <scope>FUNCTION</scope>
    <source>
        <strain>BL21</strain>
    </source>
</reference>
<reference key="2">
    <citation type="journal article" date="1997" name="Science">
        <title>The complete genome sequence of Escherichia coli K-12.</title>
        <authorList>
            <person name="Blattner F.R."/>
            <person name="Plunkett G. III"/>
            <person name="Bloch C.A."/>
            <person name="Perna N.T."/>
            <person name="Burland V."/>
            <person name="Riley M."/>
            <person name="Collado-Vides J."/>
            <person name="Glasner J.D."/>
            <person name="Rode C.K."/>
            <person name="Mayhew G.F."/>
            <person name="Gregor J."/>
            <person name="Davis N.W."/>
            <person name="Kirkpatrick H.A."/>
            <person name="Goeden M.A."/>
            <person name="Rose D.J."/>
            <person name="Mau B."/>
            <person name="Shao Y."/>
        </authorList>
    </citation>
    <scope>NUCLEOTIDE SEQUENCE [LARGE SCALE GENOMIC DNA]</scope>
    <source>
        <strain>K12 / MG1655 / ATCC 47076</strain>
    </source>
</reference>
<reference key="3">
    <citation type="journal article" date="2006" name="Mol. Syst. Biol.">
        <title>Highly accurate genome sequences of Escherichia coli K-12 strains MG1655 and W3110.</title>
        <authorList>
            <person name="Hayashi K."/>
            <person name="Morooka N."/>
            <person name="Yamamoto Y."/>
            <person name="Fujita K."/>
            <person name="Isono K."/>
            <person name="Choi S."/>
            <person name="Ohtsubo E."/>
            <person name="Baba T."/>
            <person name="Wanner B.L."/>
            <person name="Mori H."/>
            <person name="Horiuchi T."/>
        </authorList>
    </citation>
    <scope>NUCLEOTIDE SEQUENCE [LARGE SCALE GENOMIC DNA]</scope>
    <source>
        <strain>K12 / W3110 / ATCC 27325 / DSM 5911</strain>
    </source>
</reference>
<reference key="4">
    <citation type="journal article" date="1996" name="J. Biol. Chem.">
        <title>Identification of the cpdA gene encoding cyclic 3',5'-adenosine monophosphate phosphodiesterase in Escherichia coli.</title>
        <authorList>
            <person name="Imamura R."/>
            <person name="Yamanaka K."/>
            <person name="Ogura T."/>
            <person name="Hiraga S."/>
            <person name="Fujita N."/>
            <person name="Ishihama A."/>
            <person name="Niki H."/>
        </authorList>
    </citation>
    <scope>NUCLEOTIDE SEQUENCE [GENOMIC DNA] OF 98-209</scope>
    <source>
        <strain>K12</strain>
    </source>
</reference>
<reference key="5">
    <citation type="journal article" date="1999" name="J. Biol. Chem.">
        <title>Studies on the ADP-ribose pyrophosphatase subfamily of the nudix hydrolases and tentative identification of trgB, a gene associated with tellurite resistance.</title>
        <authorList>
            <person name="Dunn C.A."/>
            <person name="O'Handley S.F."/>
            <person name="Frick D.N."/>
            <person name="Bessman M.J."/>
        </authorList>
    </citation>
    <scope>CHARACTERIZATION</scope>
    <source>
        <strain>K12 / MG1655 / ATCC 47076</strain>
    </source>
</reference>
<reference key="6">
    <citation type="journal article" date="2001" name="Nat. Struct. Biol.">
        <title>The structure of ADP-ribose pyrophosphatase reveals the structural basis for the versatility of the Nudix family.</title>
        <authorList>
            <person name="Gabelli S.B."/>
            <person name="Bianchet M.A."/>
            <person name="Bessman M.J."/>
            <person name="Amzel L.M."/>
        </authorList>
    </citation>
    <scope>X-RAY CRYSTALLOGRAPHY (1.9 ANGSTROMS) OF APOPROTEIN AND COMPLEXES WITH ADP-RIBOSE AND GADOLINIUM IONS</scope>
    <scope>COFACTOR</scope>
    <scope>CATALYTIC ACTIVITY</scope>
    <scope>SUBUNIT</scope>
</reference>
<reference key="7">
    <citation type="journal article" date="2002" name="Biochemistry">
        <title>Mechanism of the Escherichia coli ADP-ribose pyrophosphatase, a Nudix hydrolase.</title>
        <authorList>
            <person name="Gabelli S.B."/>
            <person name="Bianchet M.A."/>
            <person name="Ohnishi Y."/>
            <person name="Ichikawa Y."/>
            <person name="Bessman M.J."/>
            <person name="Amzel L.M."/>
        </authorList>
    </citation>
    <scope>X-RAY CRYSTALLOGRAPHY (2.07 ANGSTROMS) IN COMPLEX WITH AMPCPR AND MAGNESIUM IONS</scope>
    <scope>COFACTOR</scope>
    <scope>CATALYTIC MECHANISM</scope>
</reference>
<name>ADPP_ECOLI</name>
<feature type="chain" id="PRO_0000057042" description="ADP-ribose pyrophosphatase">
    <location>
        <begin position="1"/>
        <end position="209"/>
    </location>
</feature>
<feature type="domain" description="Nudix hydrolase" evidence="1">
    <location>
        <begin position="55"/>
        <end position="193"/>
    </location>
</feature>
<feature type="short sequence motif" description="Nudix box">
    <location>
        <begin position="97"/>
        <end position="118"/>
    </location>
</feature>
<feature type="active site" description="Proton acceptor" evidence="5">
    <location>
        <position position="162"/>
    </location>
</feature>
<feature type="binding site" description="in other chain">
    <location>
        <begin position="28"/>
        <end position="29"/>
    </location>
    <ligand>
        <name>substrate</name>
        <note>ligand shared between dimeric partners</note>
    </ligand>
</feature>
<feature type="binding site">
    <location>
        <begin position="51"/>
        <end position="52"/>
    </location>
    <ligand>
        <name>substrate</name>
        <note>ligand shared between dimeric partners</note>
    </ligand>
</feature>
<feature type="binding site" description="in other chain">
    <location>
        <position position="56"/>
    </location>
    <ligand>
        <name>substrate</name>
        <note>ligand shared between dimeric partners</note>
    </ligand>
</feature>
<feature type="binding site" description="in other chain">
    <location>
        <position position="79"/>
    </location>
    <ligand>
        <name>substrate</name>
        <note>ligand shared between dimeric partners</note>
    </ligand>
</feature>
<feature type="binding site">
    <location>
        <position position="96"/>
    </location>
    <ligand>
        <name>Mg(2+)</name>
        <dbReference type="ChEBI" id="CHEBI:18420"/>
        <label>1</label>
    </ligand>
</feature>
<feature type="binding site" description="in other chain">
    <location>
        <position position="98"/>
    </location>
    <ligand>
        <name>substrate</name>
        <note>ligand shared between dimeric partners</note>
    </ligand>
</feature>
<feature type="binding site">
    <location>
        <position position="112"/>
    </location>
    <ligand>
        <name>Mg(2+)</name>
        <dbReference type="ChEBI" id="CHEBI:18420"/>
        <label>2</label>
    </ligand>
</feature>
<feature type="binding site">
    <location>
        <position position="112"/>
    </location>
    <ligand>
        <name>Mg(2+)</name>
        <dbReference type="ChEBI" id="CHEBI:18420"/>
        <label>3</label>
    </ligand>
</feature>
<feature type="binding site">
    <location>
        <position position="116"/>
    </location>
    <ligand>
        <name>Mg(2+)</name>
        <dbReference type="ChEBI" id="CHEBI:18420"/>
        <label>1</label>
    </ligand>
</feature>
<feature type="binding site">
    <location>
        <position position="116"/>
    </location>
    <ligand>
        <name>Mg(2+)</name>
        <dbReference type="ChEBI" id="CHEBI:18420"/>
        <label>3</label>
    </ligand>
</feature>
<feature type="binding site">
    <location>
        <begin position="133"/>
        <end position="135"/>
    </location>
    <ligand>
        <name>substrate</name>
        <note>ligand shared between dimeric partners</note>
    </ligand>
</feature>
<feature type="binding site" description="in other chain">
    <location>
        <position position="139"/>
    </location>
    <ligand>
        <name>substrate</name>
        <note>ligand shared between dimeric partners</note>
    </ligand>
</feature>
<feature type="binding site">
    <location>
        <position position="164"/>
    </location>
    <ligand>
        <name>Mg(2+)</name>
        <dbReference type="ChEBI" id="CHEBI:18420"/>
        <label>3</label>
    </ligand>
</feature>
<feature type="sequence conflict" description="In Ref. 1; CAC44036." evidence="5" ref="1">
    <original>L</original>
    <variation>V</variation>
    <location>
        <position position="2"/>
    </location>
</feature>
<feature type="sequence conflict" description="In Ref. 1; CAC44036." evidence="5" ref="1">
    <original>N</original>
    <variation>S</variation>
    <location>
        <position position="6"/>
    </location>
</feature>
<feature type="strand" evidence="6">
    <location>
        <begin position="8"/>
        <end position="10"/>
    </location>
</feature>
<feature type="helix" evidence="6">
    <location>
        <begin position="13"/>
        <end position="15"/>
    </location>
</feature>
<feature type="strand" evidence="6">
    <location>
        <begin position="16"/>
        <end position="39"/>
    </location>
</feature>
<feature type="strand" evidence="6">
    <location>
        <begin position="49"/>
        <end position="55"/>
    </location>
</feature>
<feature type="strand" evidence="6">
    <location>
        <begin position="59"/>
        <end position="66"/>
    </location>
</feature>
<feature type="turn" evidence="6">
    <location>
        <begin position="67"/>
        <end position="70"/>
    </location>
</feature>
<feature type="strand" evidence="6">
    <location>
        <begin position="71"/>
        <end position="78"/>
    </location>
</feature>
<feature type="helix" evidence="6">
    <location>
        <begin position="80"/>
        <end position="85"/>
    </location>
</feature>
<feature type="strand" evidence="6">
    <location>
        <begin position="89"/>
        <end position="93"/>
    </location>
</feature>
<feature type="strand" evidence="6">
    <location>
        <begin position="95"/>
        <end position="98"/>
    </location>
</feature>
<feature type="helix" evidence="6">
    <location>
        <begin position="105"/>
        <end position="117"/>
    </location>
</feature>
<feature type="strand" evidence="6">
    <location>
        <begin position="124"/>
        <end position="132"/>
    </location>
</feature>
<feature type="turn" evidence="6">
    <location>
        <begin position="134"/>
        <end position="136"/>
    </location>
</feature>
<feature type="strand" evidence="6">
    <location>
        <begin position="140"/>
        <end position="147"/>
    </location>
</feature>
<feature type="helix" evidence="6">
    <location>
        <begin position="150"/>
        <end position="152"/>
    </location>
</feature>
<feature type="strand" evidence="7">
    <location>
        <begin position="155"/>
        <end position="157"/>
    </location>
</feature>
<feature type="turn" evidence="7">
    <location>
        <begin position="161"/>
        <end position="165"/>
    </location>
</feature>
<feature type="strand" evidence="6">
    <location>
        <begin position="167"/>
        <end position="172"/>
    </location>
</feature>
<feature type="helix" evidence="6">
    <location>
        <begin position="173"/>
        <end position="181"/>
    </location>
</feature>
<feature type="helix" evidence="6">
    <location>
        <begin position="188"/>
        <end position="207"/>
    </location>
</feature>
<evidence type="ECO:0000255" key="1">
    <source>
        <dbReference type="PROSITE-ProRule" id="PRU00794"/>
    </source>
</evidence>
<evidence type="ECO:0000269" key="2">
    <source>
    </source>
</evidence>
<evidence type="ECO:0000269" key="3">
    <source>
    </source>
</evidence>
<evidence type="ECO:0000269" key="4">
    <source>
    </source>
</evidence>
<evidence type="ECO:0000305" key="5"/>
<evidence type="ECO:0007829" key="6">
    <source>
        <dbReference type="PDB" id="1G0S"/>
    </source>
</evidence>
<evidence type="ECO:0007829" key="7">
    <source>
        <dbReference type="PDB" id="1KHZ"/>
    </source>
</evidence>
<protein>
    <recommendedName>
        <fullName>ADP-ribose pyrophosphatase</fullName>
        <ecNumber>3.6.1.13</ecNumber>
    </recommendedName>
    <alternativeName>
        <fullName>ADP-ribose diphosphatase</fullName>
    </alternativeName>
    <alternativeName>
        <fullName>ADP-ribose phosphohydrolase</fullName>
        <shortName>ASPPase</shortName>
    </alternativeName>
    <alternativeName>
        <fullName>Adenosine diphosphoribose pyrophosphatase</fullName>
        <shortName>ADPR-PPase</shortName>
    </alternativeName>
</protein>
<keyword id="KW-0002">3D-structure</keyword>
<keyword id="KW-0903">Direct protein sequencing</keyword>
<keyword id="KW-0378">Hydrolase</keyword>
<keyword id="KW-0460">Magnesium</keyword>
<keyword id="KW-0464">Manganese</keyword>
<keyword id="KW-0479">Metal-binding</keyword>
<keyword id="KW-1185">Reference proteome</keyword>
<proteinExistence type="evidence at protein level"/>
<organism>
    <name type="scientific">Escherichia coli (strain K12)</name>
    <dbReference type="NCBI Taxonomy" id="83333"/>
    <lineage>
        <taxon>Bacteria</taxon>
        <taxon>Pseudomonadati</taxon>
        <taxon>Pseudomonadota</taxon>
        <taxon>Gammaproteobacteria</taxon>
        <taxon>Enterobacterales</taxon>
        <taxon>Enterobacteriaceae</taxon>
        <taxon>Escherichia</taxon>
    </lineage>
</organism>
<dbReference type="EC" id="3.6.1.13"/>
<dbReference type="EMBL" id="AJ298136">
    <property type="protein sequence ID" value="CAC44036.1"/>
    <property type="molecule type" value="Genomic_DNA"/>
</dbReference>
<dbReference type="EMBL" id="U28377">
    <property type="protein sequence ID" value="AAA69202.1"/>
    <property type="molecule type" value="Genomic_DNA"/>
</dbReference>
<dbReference type="EMBL" id="U00096">
    <property type="protein sequence ID" value="AAC76070.1"/>
    <property type="molecule type" value="Genomic_DNA"/>
</dbReference>
<dbReference type="EMBL" id="AP009048">
    <property type="protein sequence ID" value="BAE77090.1"/>
    <property type="molecule type" value="Genomic_DNA"/>
</dbReference>
<dbReference type="EMBL" id="D16557">
    <property type="status" value="NOT_ANNOTATED_CDS"/>
    <property type="molecule type" value="Genomic_DNA"/>
</dbReference>
<dbReference type="PIR" id="H65090">
    <property type="entry name" value="H65090"/>
</dbReference>
<dbReference type="RefSeq" id="NP_417506.1">
    <property type="nucleotide sequence ID" value="NC_000913.3"/>
</dbReference>
<dbReference type="RefSeq" id="WP_000917117.1">
    <property type="nucleotide sequence ID" value="NZ_STEB01000001.1"/>
</dbReference>
<dbReference type="PDB" id="1G0S">
    <property type="method" value="X-ray"/>
    <property type="resolution" value="1.90 A"/>
    <property type="chains" value="A/B=1-209"/>
</dbReference>
<dbReference type="PDB" id="1G9Q">
    <property type="method" value="X-ray"/>
    <property type="resolution" value="2.30 A"/>
    <property type="chains" value="A/B=1-209"/>
</dbReference>
<dbReference type="PDB" id="1GA7">
    <property type="method" value="X-ray"/>
    <property type="resolution" value="2.71 A"/>
    <property type="chains" value="A/B=1-209"/>
</dbReference>
<dbReference type="PDB" id="1KHZ">
    <property type="method" value="X-ray"/>
    <property type="resolution" value="2.04 A"/>
    <property type="chains" value="A/B=1-209"/>
</dbReference>
<dbReference type="PDB" id="1VIQ">
    <property type="method" value="X-ray"/>
    <property type="resolution" value="2.40 A"/>
    <property type="chains" value="A/B/C=2-209"/>
</dbReference>
<dbReference type="PDBsum" id="1G0S"/>
<dbReference type="PDBsum" id="1G9Q"/>
<dbReference type="PDBsum" id="1GA7"/>
<dbReference type="PDBsum" id="1KHZ"/>
<dbReference type="PDBsum" id="1VIQ"/>
<dbReference type="SMR" id="Q93K97"/>
<dbReference type="BioGRID" id="4263247">
    <property type="interactions" value="28"/>
</dbReference>
<dbReference type="DIP" id="DIP-36214N"/>
<dbReference type="FunCoup" id="Q93K97">
    <property type="interactions" value="397"/>
</dbReference>
<dbReference type="IntAct" id="Q93K97">
    <property type="interactions" value="5"/>
</dbReference>
<dbReference type="STRING" id="511145.b3034"/>
<dbReference type="jPOST" id="Q93K97"/>
<dbReference type="PaxDb" id="511145-b3034"/>
<dbReference type="EnsemblBacteria" id="AAC76070">
    <property type="protein sequence ID" value="AAC76070"/>
    <property type="gene ID" value="b3034"/>
</dbReference>
<dbReference type="GeneID" id="93778959"/>
<dbReference type="GeneID" id="947519"/>
<dbReference type="KEGG" id="ecj:JW3002"/>
<dbReference type="KEGG" id="eco:b3034"/>
<dbReference type="KEGG" id="ecoc:C3026_16570"/>
<dbReference type="PATRIC" id="fig|1411691.4.peg.3697"/>
<dbReference type="eggNOG" id="COG0494">
    <property type="taxonomic scope" value="Bacteria"/>
</dbReference>
<dbReference type="HOGENOM" id="CLU_062658_6_1_6"/>
<dbReference type="InParanoid" id="Q93K97"/>
<dbReference type="OMA" id="TIIALQW"/>
<dbReference type="OrthoDB" id="5292471at2"/>
<dbReference type="PhylomeDB" id="Q93K97"/>
<dbReference type="BioCyc" id="EcoCyc:EG12633-MONOMER"/>
<dbReference type="BioCyc" id="MetaCyc:EG12633-MONOMER"/>
<dbReference type="BRENDA" id="3.6.1.13">
    <property type="organism ID" value="2026"/>
</dbReference>
<dbReference type="EvolutionaryTrace" id="Q93K97"/>
<dbReference type="PRO" id="PR:Q93K97"/>
<dbReference type="Proteomes" id="UP000000625">
    <property type="component" value="Chromosome"/>
</dbReference>
<dbReference type="GO" id="GO:0005829">
    <property type="term" value="C:cytosol"/>
    <property type="evidence" value="ECO:0000314"/>
    <property type="project" value="EcoCyc"/>
</dbReference>
<dbReference type="GO" id="GO:0047631">
    <property type="term" value="F:ADP-ribose diphosphatase activity"/>
    <property type="evidence" value="ECO:0000314"/>
    <property type="project" value="EcoCyc"/>
</dbReference>
<dbReference type="GO" id="GO:0019144">
    <property type="term" value="F:ADP-sugar diphosphatase activity"/>
    <property type="evidence" value="ECO:0000314"/>
    <property type="project" value="EcoCyc"/>
</dbReference>
<dbReference type="GO" id="GO:0000287">
    <property type="term" value="F:magnesium ion binding"/>
    <property type="evidence" value="ECO:0000314"/>
    <property type="project" value="EcoCyc"/>
</dbReference>
<dbReference type="GO" id="GO:0042803">
    <property type="term" value="F:protein homodimerization activity"/>
    <property type="evidence" value="ECO:0000314"/>
    <property type="project" value="EcoCyc"/>
</dbReference>
<dbReference type="GO" id="GO:0016462">
    <property type="term" value="F:pyrophosphatase activity"/>
    <property type="evidence" value="ECO:0000314"/>
    <property type="project" value="EcoCyc"/>
</dbReference>
<dbReference type="GO" id="GO:0006753">
    <property type="term" value="P:nucleoside phosphate metabolic process"/>
    <property type="evidence" value="ECO:0000318"/>
    <property type="project" value="GO_Central"/>
</dbReference>
<dbReference type="GO" id="GO:0009408">
    <property type="term" value="P:response to heat"/>
    <property type="evidence" value="ECO:0000315"/>
    <property type="project" value="EcoCyc"/>
</dbReference>
<dbReference type="GO" id="GO:0019693">
    <property type="term" value="P:ribose phosphate metabolic process"/>
    <property type="evidence" value="ECO:0000318"/>
    <property type="project" value="GO_Central"/>
</dbReference>
<dbReference type="CDD" id="cd24155">
    <property type="entry name" value="NUDIX_ADPRase"/>
    <property type="match status" value="1"/>
</dbReference>
<dbReference type="FunFam" id="3.90.79.10:FF:000011">
    <property type="entry name" value="ADP-ribose pyrophosphatase"/>
    <property type="match status" value="1"/>
</dbReference>
<dbReference type="Gene3D" id="3.90.79.10">
    <property type="entry name" value="Nucleoside Triphosphate Pyrophosphohydrolase"/>
    <property type="match status" value="1"/>
</dbReference>
<dbReference type="InterPro" id="IPR004385">
    <property type="entry name" value="NDP_pyrophosphatase"/>
</dbReference>
<dbReference type="InterPro" id="IPR015797">
    <property type="entry name" value="NUDIX_hydrolase-like_dom_sf"/>
</dbReference>
<dbReference type="InterPro" id="IPR020084">
    <property type="entry name" value="NUDIX_hydrolase_CS"/>
</dbReference>
<dbReference type="InterPro" id="IPR000086">
    <property type="entry name" value="NUDIX_hydrolase_dom"/>
</dbReference>
<dbReference type="NCBIfam" id="TIGR00052">
    <property type="entry name" value="nudix-type nucleoside diphosphatase, YffH/AdpP family"/>
    <property type="match status" value="1"/>
</dbReference>
<dbReference type="NCBIfam" id="NF008003">
    <property type="entry name" value="PRK10729.1"/>
    <property type="match status" value="1"/>
</dbReference>
<dbReference type="PANTHER" id="PTHR11839:SF5">
    <property type="entry name" value="ADP-RIBOSE PYROPHOSPHATASE"/>
    <property type="match status" value="1"/>
</dbReference>
<dbReference type="PANTHER" id="PTHR11839">
    <property type="entry name" value="UDP/ADP-SUGAR PYROPHOSPHATASE"/>
    <property type="match status" value="1"/>
</dbReference>
<dbReference type="Pfam" id="PF00293">
    <property type="entry name" value="NUDIX"/>
    <property type="match status" value="1"/>
</dbReference>
<dbReference type="SUPFAM" id="SSF55811">
    <property type="entry name" value="Nudix"/>
    <property type="match status" value="1"/>
</dbReference>
<dbReference type="PROSITE" id="PS51462">
    <property type="entry name" value="NUDIX"/>
    <property type="match status" value="1"/>
</dbReference>
<dbReference type="PROSITE" id="PS00893">
    <property type="entry name" value="NUDIX_BOX"/>
    <property type="match status" value="1"/>
</dbReference>
<sequence length="209" mass="23667">MLKPDNLPVTFGKNDVEIIARETLYRGFFSLDLYRFRHRLFNGQMSHEVRREIFERGHAAVLLPFDPVRDEVVLIEQIRIAAYDTSETPWLLEMVAGMIEEGESVEDVARREAIEEAGLIVKRTKPVLSFLASPGGTSERSSIMVGEVDATTASGIHGLADENEDIRVHVVSREQAYQWVEEGKIDNAASVIALQWLQLHHQALKNEWA</sequence>
<gene>
    <name type="primary">nudF</name>
    <name type="synonym">aspP</name>
    <name type="synonym">yqiE</name>
    <name type="synonym">yzzG</name>
    <name type="ordered locus">b3034</name>
    <name type="ordered locus">JW3002</name>
</gene>